<protein>
    <recommendedName>
        <fullName>Phosphate acetyltransferase</fullName>
        <ecNumber>2.3.1.8</ecNumber>
    </recommendedName>
    <alternativeName>
        <fullName>Phosphotransacetylase</fullName>
    </alternativeName>
</protein>
<evidence type="ECO:0000305" key="1"/>
<sequence>MKKQHIINETFLDEILAQKLGTTYIPPTGIKDADFEQAAKHFINLLLRADGLKPIKTAVVHPIDKESLLGAVRAAQFNVIKPVLIGPQHKIESVAKVNDVDLENYQVINAEHSHEAAKKAVELAKKREVSAIMKGALHTDELMSAVVYKENGLRTERRISHAFLMAVATFPKPFIITDAAINIRPTLEDKRDIVQNAIDLMHMIKEDKQVRVAVLSAVETVTSAIPTTLDAAALSKMADRGQIMNAIVDGPLAFDNAISLFAAEAKGINSPVSGNADILVAPDLESGNLLAKQLKYLGQAVMAGIVLGARVPIILTSRADPIDMRVISCVLASFIYNQTKAKLHIQASQ</sequence>
<comment type="catalytic activity">
    <reaction>
        <text>acetyl-CoA + phosphate = acetyl phosphate + CoA</text>
        <dbReference type="Rhea" id="RHEA:19521"/>
        <dbReference type="ChEBI" id="CHEBI:22191"/>
        <dbReference type="ChEBI" id="CHEBI:43474"/>
        <dbReference type="ChEBI" id="CHEBI:57287"/>
        <dbReference type="ChEBI" id="CHEBI:57288"/>
        <dbReference type="EC" id="2.3.1.8"/>
    </reaction>
</comment>
<comment type="pathway">
    <text>Metabolic intermediate biosynthesis; acetyl-CoA biosynthesis; acetyl-CoA from acetate: step 2/2.</text>
</comment>
<comment type="subcellular location">
    <subcellularLocation>
        <location evidence="1">Cytoplasm</location>
    </subcellularLocation>
</comment>
<comment type="similarity">
    <text evidence="1">Belongs to the phosphate acetyltransferase and butyryltransferase family.</text>
</comment>
<reference key="1">
    <citation type="journal article" date="2004" name="J. Bacteriol.">
        <title>Complete genome sequence of Rickettsia typhi and comparison with sequences of other Rickettsiae.</title>
        <authorList>
            <person name="McLeod M.P."/>
            <person name="Qin X."/>
            <person name="Karpathy S.E."/>
            <person name="Gioia J."/>
            <person name="Highlander S.K."/>
            <person name="Fox G.E."/>
            <person name="McNeill T.Z."/>
            <person name="Jiang H."/>
            <person name="Muzny D."/>
            <person name="Jacob L.S."/>
            <person name="Hawes A.C."/>
            <person name="Sodergren E."/>
            <person name="Gill R."/>
            <person name="Hume J."/>
            <person name="Morgan M."/>
            <person name="Fan G."/>
            <person name="Amin A.G."/>
            <person name="Gibbs R.A."/>
            <person name="Hong C."/>
            <person name="Yu X.-J."/>
            <person name="Walker D.H."/>
            <person name="Weinstock G.M."/>
        </authorList>
    </citation>
    <scope>NUCLEOTIDE SEQUENCE [LARGE SCALE GENOMIC DNA]</scope>
    <source>
        <strain>ATCC VR-144 / Wilmington</strain>
    </source>
</reference>
<dbReference type="EC" id="2.3.1.8"/>
<dbReference type="EMBL" id="AE017197">
    <property type="protein sequence ID" value="AAU03515.1"/>
    <property type="molecule type" value="Genomic_DNA"/>
</dbReference>
<dbReference type="RefSeq" id="WP_011190502.1">
    <property type="nucleotide sequence ID" value="NC_006142.1"/>
</dbReference>
<dbReference type="SMR" id="Q68XX7"/>
<dbReference type="KEGG" id="rty:RT0027"/>
<dbReference type="eggNOG" id="COG0280">
    <property type="taxonomic scope" value="Bacteria"/>
</dbReference>
<dbReference type="HOGENOM" id="CLU_056531_1_0_5"/>
<dbReference type="OrthoDB" id="9800237at2"/>
<dbReference type="UniPathway" id="UPA00340">
    <property type="reaction ID" value="UER00459"/>
</dbReference>
<dbReference type="Proteomes" id="UP000000604">
    <property type="component" value="Chromosome"/>
</dbReference>
<dbReference type="GO" id="GO:0005737">
    <property type="term" value="C:cytoplasm"/>
    <property type="evidence" value="ECO:0007669"/>
    <property type="project" value="UniProtKB-SubCell"/>
</dbReference>
<dbReference type="GO" id="GO:0008959">
    <property type="term" value="F:phosphate acetyltransferase activity"/>
    <property type="evidence" value="ECO:0007669"/>
    <property type="project" value="UniProtKB-EC"/>
</dbReference>
<dbReference type="GO" id="GO:0006085">
    <property type="term" value="P:acetyl-CoA biosynthetic process"/>
    <property type="evidence" value="ECO:0007669"/>
    <property type="project" value="UniProtKB-UniPathway"/>
</dbReference>
<dbReference type="Gene3D" id="3.40.718.10">
    <property type="entry name" value="Isopropylmalate Dehydrogenase"/>
    <property type="match status" value="1"/>
</dbReference>
<dbReference type="InterPro" id="IPR012147">
    <property type="entry name" value="P_Ac_Bu_trans"/>
</dbReference>
<dbReference type="InterPro" id="IPR050500">
    <property type="entry name" value="Phos_Acetyltrans/Butyryltrans"/>
</dbReference>
<dbReference type="InterPro" id="IPR002505">
    <property type="entry name" value="PTA_PTB"/>
</dbReference>
<dbReference type="NCBIfam" id="NF006045">
    <property type="entry name" value="PRK08190.1"/>
    <property type="match status" value="1"/>
</dbReference>
<dbReference type="NCBIfam" id="NF008852">
    <property type="entry name" value="PRK11890.1"/>
    <property type="match status" value="1"/>
</dbReference>
<dbReference type="PANTHER" id="PTHR43356">
    <property type="entry name" value="PHOSPHATE ACETYLTRANSFERASE"/>
    <property type="match status" value="1"/>
</dbReference>
<dbReference type="PANTHER" id="PTHR43356:SF2">
    <property type="entry name" value="PHOSPHATE ACETYLTRANSFERASE"/>
    <property type="match status" value="1"/>
</dbReference>
<dbReference type="Pfam" id="PF01515">
    <property type="entry name" value="PTA_PTB"/>
    <property type="match status" value="1"/>
</dbReference>
<dbReference type="PIRSF" id="PIRSF000428">
    <property type="entry name" value="P_Ac_trans"/>
    <property type="match status" value="1"/>
</dbReference>
<dbReference type="SUPFAM" id="SSF53659">
    <property type="entry name" value="Isocitrate/Isopropylmalate dehydrogenase-like"/>
    <property type="match status" value="1"/>
</dbReference>
<organism>
    <name type="scientific">Rickettsia typhi (strain ATCC VR-144 / Wilmington)</name>
    <dbReference type="NCBI Taxonomy" id="257363"/>
    <lineage>
        <taxon>Bacteria</taxon>
        <taxon>Pseudomonadati</taxon>
        <taxon>Pseudomonadota</taxon>
        <taxon>Alphaproteobacteria</taxon>
        <taxon>Rickettsiales</taxon>
        <taxon>Rickettsiaceae</taxon>
        <taxon>Rickettsieae</taxon>
        <taxon>Rickettsia</taxon>
        <taxon>typhus group</taxon>
    </lineage>
</organism>
<keyword id="KW-0012">Acyltransferase</keyword>
<keyword id="KW-0963">Cytoplasm</keyword>
<keyword id="KW-0808">Transferase</keyword>
<gene>
    <name type="primary">pta</name>
    <name type="ordered locus">RT0027</name>
</gene>
<feature type="chain" id="PRO_0000286663" description="Phosphate acetyltransferase">
    <location>
        <begin position="1"/>
        <end position="349"/>
    </location>
</feature>
<name>PTAS_RICTY</name>
<proteinExistence type="inferred from homology"/>
<accession>Q68XX7</accession>